<dbReference type="EC" id="2.4.99.28" evidence="1"/>
<dbReference type="EMBL" id="FN869568">
    <property type="protein sequence ID" value="CBV41845.1"/>
    <property type="molecule type" value="Genomic_DNA"/>
</dbReference>
<dbReference type="RefSeq" id="WP_013331717.1">
    <property type="nucleotide sequence ID" value="NC_014532.2"/>
</dbReference>
<dbReference type="SMR" id="E1V9L1"/>
<dbReference type="STRING" id="768066.HELO_1961"/>
<dbReference type="GeneID" id="91009218"/>
<dbReference type="KEGG" id="hel:HELO_1961"/>
<dbReference type="eggNOG" id="COG0772">
    <property type="taxonomic scope" value="Bacteria"/>
</dbReference>
<dbReference type="HOGENOM" id="CLU_029243_1_1_6"/>
<dbReference type="OrthoDB" id="9768187at2"/>
<dbReference type="UniPathway" id="UPA00219"/>
<dbReference type="Proteomes" id="UP000008707">
    <property type="component" value="Chromosome"/>
</dbReference>
<dbReference type="GO" id="GO:0032153">
    <property type="term" value="C:cell division site"/>
    <property type="evidence" value="ECO:0007669"/>
    <property type="project" value="UniProtKB-UniRule"/>
</dbReference>
<dbReference type="GO" id="GO:0005886">
    <property type="term" value="C:plasma membrane"/>
    <property type="evidence" value="ECO:0007669"/>
    <property type="project" value="UniProtKB-SubCell"/>
</dbReference>
<dbReference type="GO" id="GO:0015648">
    <property type="term" value="F:lipid-linked peptidoglycan transporter activity"/>
    <property type="evidence" value="ECO:0007669"/>
    <property type="project" value="TreeGrafter"/>
</dbReference>
<dbReference type="GO" id="GO:0008955">
    <property type="term" value="F:peptidoglycan glycosyltransferase activity"/>
    <property type="evidence" value="ECO:0007669"/>
    <property type="project" value="UniProtKB-UniRule"/>
</dbReference>
<dbReference type="GO" id="GO:0071555">
    <property type="term" value="P:cell wall organization"/>
    <property type="evidence" value="ECO:0007669"/>
    <property type="project" value="UniProtKB-KW"/>
</dbReference>
<dbReference type="GO" id="GO:0043093">
    <property type="term" value="P:FtsZ-dependent cytokinesis"/>
    <property type="evidence" value="ECO:0007669"/>
    <property type="project" value="UniProtKB-UniRule"/>
</dbReference>
<dbReference type="GO" id="GO:0009252">
    <property type="term" value="P:peptidoglycan biosynthetic process"/>
    <property type="evidence" value="ECO:0007669"/>
    <property type="project" value="UniProtKB-UniRule"/>
</dbReference>
<dbReference type="GO" id="GO:0008360">
    <property type="term" value="P:regulation of cell shape"/>
    <property type="evidence" value="ECO:0007669"/>
    <property type="project" value="UniProtKB-KW"/>
</dbReference>
<dbReference type="HAMAP" id="MF_00913">
    <property type="entry name" value="PGT_FtsW_proteobact"/>
    <property type="match status" value="1"/>
</dbReference>
<dbReference type="InterPro" id="IPR018365">
    <property type="entry name" value="Cell_cycle_FtsW-rel_CS"/>
</dbReference>
<dbReference type="InterPro" id="IPR013437">
    <property type="entry name" value="FtsW"/>
</dbReference>
<dbReference type="InterPro" id="IPR001182">
    <property type="entry name" value="FtsW/RodA"/>
</dbReference>
<dbReference type="NCBIfam" id="TIGR02614">
    <property type="entry name" value="ftsW"/>
    <property type="match status" value="1"/>
</dbReference>
<dbReference type="PANTHER" id="PTHR30474">
    <property type="entry name" value="CELL CYCLE PROTEIN"/>
    <property type="match status" value="1"/>
</dbReference>
<dbReference type="PANTHER" id="PTHR30474:SF2">
    <property type="entry name" value="PEPTIDOGLYCAN GLYCOSYLTRANSFERASE FTSW-RELATED"/>
    <property type="match status" value="1"/>
</dbReference>
<dbReference type="Pfam" id="PF01098">
    <property type="entry name" value="FTSW_RODA_SPOVE"/>
    <property type="match status" value="1"/>
</dbReference>
<dbReference type="PROSITE" id="PS00428">
    <property type="entry name" value="FTSW_RODA_SPOVE"/>
    <property type="match status" value="1"/>
</dbReference>
<protein>
    <recommendedName>
        <fullName evidence="1">Probable peptidoglycan glycosyltransferase FtsW</fullName>
        <shortName evidence="1">PGT</shortName>
        <ecNumber evidence="1">2.4.99.28</ecNumber>
    </recommendedName>
    <alternativeName>
        <fullName evidence="1">Cell division protein FtsW</fullName>
    </alternativeName>
    <alternativeName>
        <fullName evidence="1">Cell wall polymerase</fullName>
    </alternativeName>
    <alternativeName>
        <fullName evidence="1">Peptidoglycan polymerase</fullName>
        <shortName evidence="1">PG polymerase</shortName>
    </alternativeName>
</protein>
<proteinExistence type="inferred from homology"/>
<organism>
    <name type="scientific">Halomonas elongata (strain ATCC 33173 / DSM 2581 / NBRC 15536 / NCIMB 2198 / 1H9)</name>
    <dbReference type="NCBI Taxonomy" id="768066"/>
    <lineage>
        <taxon>Bacteria</taxon>
        <taxon>Pseudomonadati</taxon>
        <taxon>Pseudomonadota</taxon>
        <taxon>Gammaproteobacteria</taxon>
        <taxon>Oceanospirillales</taxon>
        <taxon>Halomonadaceae</taxon>
        <taxon>Halomonas</taxon>
    </lineage>
</organism>
<sequence>MSRLARLREQLSTRDHFCDGWLLVATLSLMLIGWVMVTSASTEVATSLTGNPWYFSVRHGVFVLCSMVVALLVLRIPMAWWKANGPLLLLVGLALLALVLVAGREVNGSRRWLSVPGIPLNLQASEIAKLCLIVYLAGYLERFLPQVRRHWGAFLRPLMVMAVMGVLLIFEPDYGAVVVMTGCVMGMLLMAGAPWGRFLLLMGLVAALGAALAIAEPYRMARLTSFVDPWADQFASGYQLTQALIAFGRGEWFGTGLGNSVQKLFYLPEAHTDFVFAVLAEELGMIGAVAVIGLFALLVWRAMAVGRRAELAKRPFAAYLCYGIALVIGAQAFINIAVSTGMLPTKGLTLPLLSYGGSSLVISAVMVGMLLRVDIETRQARRREQPAAPRTGEARS</sequence>
<gene>
    <name evidence="1" type="primary">ftsW</name>
    <name type="ordered locus">HELO_1961</name>
</gene>
<keyword id="KW-0131">Cell cycle</keyword>
<keyword id="KW-0132">Cell division</keyword>
<keyword id="KW-0997">Cell inner membrane</keyword>
<keyword id="KW-1003">Cell membrane</keyword>
<keyword id="KW-0133">Cell shape</keyword>
<keyword id="KW-0961">Cell wall biogenesis/degradation</keyword>
<keyword id="KW-0328">Glycosyltransferase</keyword>
<keyword id="KW-0472">Membrane</keyword>
<keyword id="KW-0573">Peptidoglycan synthesis</keyword>
<keyword id="KW-0808">Transferase</keyword>
<keyword id="KW-0812">Transmembrane</keyword>
<keyword id="KW-1133">Transmembrane helix</keyword>
<comment type="function">
    <text evidence="1">Peptidoglycan polymerase that is essential for cell division.</text>
</comment>
<comment type="catalytic activity">
    <reaction evidence="1">
        <text>[GlcNAc-(1-&gt;4)-Mur2Ac(oyl-L-Ala-gamma-D-Glu-L-Lys-D-Ala-D-Ala)](n)-di-trans,octa-cis-undecaprenyl diphosphate + beta-D-GlcNAc-(1-&gt;4)-Mur2Ac(oyl-L-Ala-gamma-D-Glu-L-Lys-D-Ala-D-Ala)-di-trans,octa-cis-undecaprenyl diphosphate = [GlcNAc-(1-&gt;4)-Mur2Ac(oyl-L-Ala-gamma-D-Glu-L-Lys-D-Ala-D-Ala)](n+1)-di-trans,octa-cis-undecaprenyl diphosphate + di-trans,octa-cis-undecaprenyl diphosphate + H(+)</text>
        <dbReference type="Rhea" id="RHEA:23708"/>
        <dbReference type="Rhea" id="RHEA-COMP:9602"/>
        <dbReference type="Rhea" id="RHEA-COMP:9603"/>
        <dbReference type="ChEBI" id="CHEBI:15378"/>
        <dbReference type="ChEBI" id="CHEBI:58405"/>
        <dbReference type="ChEBI" id="CHEBI:60033"/>
        <dbReference type="ChEBI" id="CHEBI:78435"/>
        <dbReference type="EC" id="2.4.99.28"/>
    </reaction>
</comment>
<comment type="pathway">
    <text evidence="1">Cell wall biogenesis; peptidoglycan biosynthesis.</text>
</comment>
<comment type="subcellular location">
    <subcellularLocation>
        <location evidence="1">Cell inner membrane</location>
        <topology evidence="1">Multi-pass membrane protein</topology>
    </subcellularLocation>
    <text evidence="1">Localizes to the division septum.</text>
</comment>
<comment type="similarity">
    <text evidence="1">Belongs to the SEDS family. FtsW subfamily.</text>
</comment>
<accession>E1V9L1</accession>
<reference key="1">
    <citation type="journal article" date="2011" name="Environ. Microbiol.">
        <title>A blueprint of ectoine metabolism from the genome of the industrial producer Halomonas elongata DSM 2581(T).</title>
        <authorList>
            <person name="Schwibbert K."/>
            <person name="Marin-Sanguino A."/>
            <person name="Bagyan I."/>
            <person name="Heidrich G."/>
            <person name="Lentzen G."/>
            <person name="Seitz H."/>
            <person name="Rampp M."/>
            <person name="Schuster S.C."/>
            <person name="Klenk H.P."/>
            <person name="Pfeiffer F."/>
            <person name="Oesterhelt D."/>
            <person name="Kunte H.J."/>
        </authorList>
    </citation>
    <scope>NUCLEOTIDE SEQUENCE [LARGE SCALE GENOMIC DNA]</scope>
    <source>
        <strain>ATCC 33173 / DSM 2581 / NBRC 15536 / NCIMB 2198 / 1H9</strain>
    </source>
</reference>
<name>FTSW_HALED</name>
<feature type="chain" id="PRO_0000415189" description="Probable peptidoglycan glycosyltransferase FtsW">
    <location>
        <begin position="1"/>
        <end position="396"/>
    </location>
</feature>
<feature type="transmembrane region" description="Helical" evidence="1">
    <location>
        <begin position="17"/>
        <end position="37"/>
    </location>
</feature>
<feature type="transmembrane region" description="Helical" evidence="1">
    <location>
        <begin position="61"/>
        <end position="81"/>
    </location>
</feature>
<feature type="transmembrane region" description="Helical" evidence="1">
    <location>
        <begin position="83"/>
        <end position="103"/>
    </location>
</feature>
<feature type="transmembrane region" description="Helical" evidence="1">
    <location>
        <begin position="117"/>
        <end position="137"/>
    </location>
</feature>
<feature type="transmembrane region" description="Helical" evidence="1">
    <location>
        <begin position="159"/>
        <end position="179"/>
    </location>
</feature>
<feature type="transmembrane region" description="Helical" evidence="1">
    <location>
        <begin position="198"/>
        <end position="218"/>
    </location>
</feature>
<feature type="transmembrane region" description="Helical" evidence="1">
    <location>
        <begin position="274"/>
        <end position="294"/>
    </location>
</feature>
<feature type="transmembrane region" description="Helical" evidence="1">
    <location>
        <begin position="316"/>
        <end position="336"/>
    </location>
</feature>
<feature type="transmembrane region" description="Helical" evidence="1">
    <location>
        <begin position="350"/>
        <end position="370"/>
    </location>
</feature>
<evidence type="ECO:0000255" key="1">
    <source>
        <dbReference type="HAMAP-Rule" id="MF_00913"/>
    </source>
</evidence>